<comment type="function">
    <text evidence="1">Condenses 4-methyl-5-(beta-hydroxyethyl)thiazole monophosphate (THZ-P) and 2-methyl-4-amino-5-hydroxymethyl pyrimidine pyrophosphate (HMP-PP) to form thiamine monophosphate (TMP).</text>
</comment>
<comment type="catalytic activity">
    <reaction evidence="1">
        <text>2-[(2R,5Z)-2-carboxy-4-methylthiazol-5(2H)-ylidene]ethyl phosphate + 4-amino-2-methyl-5-(diphosphooxymethyl)pyrimidine + 2 H(+) = thiamine phosphate + CO2 + diphosphate</text>
        <dbReference type="Rhea" id="RHEA:47844"/>
        <dbReference type="ChEBI" id="CHEBI:15378"/>
        <dbReference type="ChEBI" id="CHEBI:16526"/>
        <dbReference type="ChEBI" id="CHEBI:33019"/>
        <dbReference type="ChEBI" id="CHEBI:37575"/>
        <dbReference type="ChEBI" id="CHEBI:57841"/>
        <dbReference type="ChEBI" id="CHEBI:62899"/>
        <dbReference type="EC" id="2.5.1.3"/>
    </reaction>
</comment>
<comment type="catalytic activity">
    <reaction evidence="1">
        <text>2-(2-carboxy-4-methylthiazol-5-yl)ethyl phosphate + 4-amino-2-methyl-5-(diphosphooxymethyl)pyrimidine + 2 H(+) = thiamine phosphate + CO2 + diphosphate</text>
        <dbReference type="Rhea" id="RHEA:47848"/>
        <dbReference type="ChEBI" id="CHEBI:15378"/>
        <dbReference type="ChEBI" id="CHEBI:16526"/>
        <dbReference type="ChEBI" id="CHEBI:33019"/>
        <dbReference type="ChEBI" id="CHEBI:37575"/>
        <dbReference type="ChEBI" id="CHEBI:57841"/>
        <dbReference type="ChEBI" id="CHEBI:62890"/>
        <dbReference type="EC" id="2.5.1.3"/>
    </reaction>
</comment>
<comment type="catalytic activity">
    <reaction evidence="1">
        <text>4-methyl-5-(2-phosphooxyethyl)-thiazole + 4-amino-2-methyl-5-(diphosphooxymethyl)pyrimidine + H(+) = thiamine phosphate + diphosphate</text>
        <dbReference type="Rhea" id="RHEA:22328"/>
        <dbReference type="ChEBI" id="CHEBI:15378"/>
        <dbReference type="ChEBI" id="CHEBI:33019"/>
        <dbReference type="ChEBI" id="CHEBI:37575"/>
        <dbReference type="ChEBI" id="CHEBI:57841"/>
        <dbReference type="ChEBI" id="CHEBI:58296"/>
        <dbReference type="EC" id="2.5.1.3"/>
    </reaction>
</comment>
<comment type="cofactor">
    <cofactor evidence="1">
        <name>Mg(2+)</name>
        <dbReference type="ChEBI" id="CHEBI:18420"/>
    </cofactor>
    <text evidence="1">Binds 1 Mg(2+) ion per subunit.</text>
</comment>
<comment type="pathway">
    <text evidence="1">Cofactor biosynthesis; thiamine diphosphate biosynthesis; thiamine phosphate from 4-amino-2-methyl-5-diphosphomethylpyrimidine and 4-methyl-5-(2-phosphoethyl)-thiazole: step 1/1.</text>
</comment>
<comment type="similarity">
    <text evidence="1">Belongs to the thiamine-phosphate synthase family.</text>
</comment>
<gene>
    <name evidence="1" type="primary">thiE</name>
    <name type="ordered locus">SG3443</name>
</gene>
<dbReference type="EC" id="2.5.1.3" evidence="1"/>
<dbReference type="EMBL" id="AM933173">
    <property type="protein sequence ID" value="CAR39234.1"/>
    <property type="molecule type" value="Genomic_DNA"/>
</dbReference>
<dbReference type="RefSeq" id="WP_000284639.1">
    <property type="nucleotide sequence ID" value="NC_011274.1"/>
</dbReference>
<dbReference type="SMR" id="B5RFJ1"/>
<dbReference type="KEGG" id="seg:SG3443"/>
<dbReference type="HOGENOM" id="CLU_018272_3_3_6"/>
<dbReference type="UniPathway" id="UPA00060">
    <property type="reaction ID" value="UER00141"/>
</dbReference>
<dbReference type="Proteomes" id="UP000008321">
    <property type="component" value="Chromosome"/>
</dbReference>
<dbReference type="GO" id="GO:0005737">
    <property type="term" value="C:cytoplasm"/>
    <property type="evidence" value="ECO:0007669"/>
    <property type="project" value="TreeGrafter"/>
</dbReference>
<dbReference type="GO" id="GO:0000287">
    <property type="term" value="F:magnesium ion binding"/>
    <property type="evidence" value="ECO:0007669"/>
    <property type="project" value="UniProtKB-UniRule"/>
</dbReference>
<dbReference type="GO" id="GO:0004789">
    <property type="term" value="F:thiamine-phosphate diphosphorylase activity"/>
    <property type="evidence" value="ECO:0007669"/>
    <property type="project" value="UniProtKB-UniRule"/>
</dbReference>
<dbReference type="GO" id="GO:0009228">
    <property type="term" value="P:thiamine biosynthetic process"/>
    <property type="evidence" value="ECO:0007669"/>
    <property type="project" value="UniProtKB-KW"/>
</dbReference>
<dbReference type="GO" id="GO:0009229">
    <property type="term" value="P:thiamine diphosphate biosynthetic process"/>
    <property type="evidence" value="ECO:0007669"/>
    <property type="project" value="UniProtKB-UniRule"/>
</dbReference>
<dbReference type="CDD" id="cd00564">
    <property type="entry name" value="TMP_TenI"/>
    <property type="match status" value="1"/>
</dbReference>
<dbReference type="FunFam" id="3.20.20.70:FF:000064">
    <property type="entry name" value="Thiamine-phosphate synthase"/>
    <property type="match status" value="1"/>
</dbReference>
<dbReference type="Gene3D" id="3.20.20.70">
    <property type="entry name" value="Aldolase class I"/>
    <property type="match status" value="1"/>
</dbReference>
<dbReference type="HAMAP" id="MF_00097">
    <property type="entry name" value="TMP_synthase"/>
    <property type="match status" value="1"/>
</dbReference>
<dbReference type="InterPro" id="IPR013785">
    <property type="entry name" value="Aldolase_TIM"/>
</dbReference>
<dbReference type="InterPro" id="IPR036206">
    <property type="entry name" value="ThiamineP_synth_sf"/>
</dbReference>
<dbReference type="InterPro" id="IPR022998">
    <property type="entry name" value="ThiamineP_synth_TenI"/>
</dbReference>
<dbReference type="InterPro" id="IPR034291">
    <property type="entry name" value="TMP_synthase"/>
</dbReference>
<dbReference type="NCBIfam" id="NF002904">
    <property type="entry name" value="PRK03512.1"/>
    <property type="match status" value="1"/>
</dbReference>
<dbReference type="NCBIfam" id="TIGR00693">
    <property type="entry name" value="thiE"/>
    <property type="match status" value="1"/>
</dbReference>
<dbReference type="PANTHER" id="PTHR20857">
    <property type="entry name" value="THIAMINE-PHOSPHATE PYROPHOSPHORYLASE"/>
    <property type="match status" value="1"/>
</dbReference>
<dbReference type="PANTHER" id="PTHR20857:SF15">
    <property type="entry name" value="THIAMINE-PHOSPHATE SYNTHASE"/>
    <property type="match status" value="1"/>
</dbReference>
<dbReference type="Pfam" id="PF02581">
    <property type="entry name" value="TMP-TENI"/>
    <property type="match status" value="1"/>
</dbReference>
<dbReference type="SUPFAM" id="SSF51391">
    <property type="entry name" value="Thiamin phosphate synthase"/>
    <property type="match status" value="1"/>
</dbReference>
<keyword id="KW-0460">Magnesium</keyword>
<keyword id="KW-0479">Metal-binding</keyword>
<keyword id="KW-0784">Thiamine biosynthesis</keyword>
<keyword id="KW-0808">Transferase</keyword>
<proteinExistence type="inferred from homology"/>
<evidence type="ECO:0000255" key="1">
    <source>
        <dbReference type="HAMAP-Rule" id="MF_00097"/>
    </source>
</evidence>
<feature type="chain" id="PRO_1000093686" description="Thiamine-phosphate synthase">
    <location>
        <begin position="1"/>
        <end position="211"/>
    </location>
</feature>
<feature type="binding site" evidence="1">
    <location>
        <begin position="37"/>
        <end position="41"/>
    </location>
    <ligand>
        <name>4-amino-2-methyl-5-(diphosphooxymethyl)pyrimidine</name>
        <dbReference type="ChEBI" id="CHEBI:57841"/>
    </ligand>
</feature>
<feature type="binding site" evidence="1">
    <location>
        <position position="69"/>
    </location>
    <ligand>
        <name>4-amino-2-methyl-5-(diphosphooxymethyl)pyrimidine</name>
        <dbReference type="ChEBI" id="CHEBI:57841"/>
    </ligand>
</feature>
<feature type="binding site" evidence="1">
    <location>
        <position position="70"/>
    </location>
    <ligand>
        <name>Mg(2+)</name>
        <dbReference type="ChEBI" id="CHEBI:18420"/>
    </ligand>
</feature>
<feature type="binding site" evidence="1">
    <location>
        <position position="89"/>
    </location>
    <ligand>
        <name>Mg(2+)</name>
        <dbReference type="ChEBI" id="CHEBI:18420"/>
    </ligand>
</feature>
<feature type="binding site" evidence="1">
    <location>
        <position position="108"/>
    </location>
    <ligand>
        <name>4-amino-2-methyl-5-(diphosphooxymethyl)pyrimidine</name>
        <dbReference type="ChEBI" id="CHEBI:57841"/>
    </ligand>
</feature>
<feature type="binding site" evidence="1">
    <location>
        <begin position="134"/>
        <end position="136"/>
    </location>
    <ligand>
        <name>2-[(2R,5Z)-2-carboxy-4-methylthiazol-5(2H)-ylidene]ethyl phosphate</name>
        <dbReference type="ChEBI" id="CHEBI:62899"/>
    </ligand>
</feature>
<feature type="binding site" evidence="1">
    <location>
        <position position="137"/>
    </location>
    <ligand>
        <name>4-amino-2-methyl-5-(diphosphooxymethyl)pyrimidine</name>
        <dbReference type="ChEBI" id="CHEBI:57841"/>
    </ligand>
</feature>
<feature type="binding site" evidence="1">
    <location>
        <position position="166"/>
    </location>
    <ligand>
        <name>2-[(2R,5Z)-2-carboxy-4-methylthiazol-5(2H)-ylidene]ethyl phosphate</name>
        <dbReference type="ChEBI" id="CHEBI:62899"/>
    </ligand>
</feature>
<feature type="binding site" evidence="1">
    <location>
        <begin position="186"/>
        <end position="187"/>
    </location>
    <ligand>
        <name>2-[(2R,5Z)-2-carboxy-4-methylthiazol-5(2H)-ylidene]ethyl phosphate</name>
        <dbReference type="ChEBI" id="CHEBI:62899"/>
    </ligand>
</feature>
<protein>
    <recommendedName>
        <fullName evidence="1">Thiamine-phosphate synthase</fullName>
        <shortName evidence="1">TP synthase</shortName>
        <shortName evidence="1">TPS</shortName>
        <ecNumber evidence="1">2.5.1.3</ecNumber>
    </recommendedName>
    <alternativeName>
        <fullName evidence="1">Thiamine-phosphate pyrophosphorylase</fullName>
        <shortName evidence="1">TMP pyrophosphorylase</shortName>
        <shortName evidence="1">TMP-PPase</shortName>
    </alternativeName>
</protein>
<reference key="1">
    <citation type="journal article" date="2008" name="Genome Res.">
        <title>Comparative genome analysis of Salmonella enteritidis PT4 and Salmonella gallinarum 287/91 provides insights into evolutionary and host adaptation pathways.</title>
        <authorList>
            <person name="Thomson N.R."/>
            <person name="Clayton D.J."/>
            <person name="Windhorst D."/>
            <person name="Vernikos G."/>
            <person name="Davidson S."/>
            <person name="Churcher C."/>
            <person name="Quail M.A."/>
            <person name="Stevens M."/>
            <person name="Jones M.A."/>
            <person name="Watson M."/>
            <person name="Barron A."/>
            <person name="Layton A."/>
            <person name="Pickard D."/>
            <person name="Kingsley R.A."/>
            <person name="Bignell A."/>
            <person name="Clark L."/>
            <person name="Harris B."/>
            <person name="Ormond D."/>
            <person name="Abdellah Z."/>
            <person name="Brooks K."/>
            <person name="Cherevach I."/>
            <person name="Chillingworth T."/>
            <person name="Woodward J."/>
            <person name="Norberczak H."/>
            <person name="Lord A."/>
            <person name="Arrowsmith C."/>
            <person name="Jagels K."/>
            <person name="Moule S."/>
            <person name="Mungall K."/>
            <person name="Saunders M."/>
            <person name="Whitehead S."/>
            <person name="Chabalgoity J.A."/>
            <person name="Maskell D."/>
            <person name="Humphreys T."/>
            <person name="Roberts M."/>
            <person name="Barrow P.A."/>
            <person name="Dougan G."/>
            <person name="Parkhill J."/>
        </authorList>
    </citation>
    <scope>NUCLEOTIDE SEQUENCE [LARGE SCALE GENOMIC DNA]</scope>
    <source>
        <strain>287/91 / NCTC 13346</strain>
    </source>
</reference>
<accession>B5RFJ1</accession>
<organism>
    <name type="scientific">Salmonella gallinarum (strain 287/91 / NCTC 13346)</name>
    <dbReference type="NCBI Taxonomy" id="550538"/>
    <lineage>
        <taxon>Bacteria</taxon>
        <taxon>Pseudomonadati</taxon>
        <taxon>Pseudomonadota</taxon>
        <taxon>Gammaproteobacteria</taxon>
        <taxon>Enterobacterales</taxon>
        <taxon>Enterobacteriaceae</taxon>
        <taxon>Salmonella</taxon>
    </lineage>
</organism>
<name>THIE_SALG2</name>
<sequence length="211" mass="22898">MYQPDFPTVPFRLGLYPVVDSVAWIERLLEAGVRTIQLRIKDKRDEEVEADVIAAIALGRRYNARLFINDYWRLAIKHRAYGVHLGQEDLETTDLKAIQAAGLRLGVSTHDDMEIDVALAAKPSYIALGHVFPTQTKQMPSAPQGLAQLASHIERLADYPTVAIGGISLERATAVLATGVGSIAVVSAITQAADWRAATAQLLDIAGVGDE</sequence>